<keyword id="KW-1003">Cell membrane</keyword>
<keyword id="KW-0472">Membrane</keyword>
<keyword id="KW-1185">Reference proteome</keyword>
<keyword id="KW-0812">Transmembrane</keyword>
<keyword id="KW-1133">Transmembrane helix</keyword>
<gene>
    <name type="ordered locus">BQ2027_MB1377C</name>
</gene>
<organism>
    <name type="scientific">Mycobacterium bovis (strain ATCC BAA-935 / AF2122/97)</name>
    <dbReference type="NCBI Taxonomy" id="233413"/>
    <lineage>
        <taxon>Bacteria</taxon>
        <taxon>Bacillati</taxon>
        <taxon>Actinomycetota</taxon>
        <taxon>Actinomycetes</taxon>
        <taxon>Mycobacteriales</taxon>
        <taxon>Mycobacteriaceae</taxon>
        <taxon>Mycobacterium</taxon>
        <taxon>Mycobacterium tuberculosis complex</taxon>
    </lineage>
</organism>
<comment type="subcellular location">
    <subcellularLocation>
        <location evidence="2">Cell membrane</location>
        <topology evidence="2">Multi-pass membrane protein</topology>
    </subcellularLocation>
</comment>
<comment type="similarity">
    <text evidence="2">To M.leprae ML1176.</text>
</comment>
<sequence>MTAPETPAAQHAEPAIAVERIRTALLGYRIMAWTTGLWLIALCYEIVVRYVVKVDNPPTWIGVVHGWVYFTYLLLTLNLAVKVRWPLGKTAGVLLAGTIPLLGIVVEHFQTKEIKARFGL</sequence>
<reference key="1">
    <citation type="journal article" date="2003" name="Proc. Natl. Acad. Sci. U.S.A.">
        <title>The complete genome sequence of Mycobacterium bovis.</title>
        <authorList>
            <person name="Garnier T."/>
            <person name="Eiglmeier K."/>
            <person name="Camus J.-C."/>
            <person name="Medina N."/>
            <person name="Mansoor H."/>
            <person name="Pryor M."/>
            <person name="Duthoy S."/>
            <person name="Grondin S."/>
            <person name="Lacroix C."/>
            <person name="Monsempe C."/>
            <person name="Simon S."/>
            <person name="Harris B."/>
            <person name="Atkin R."/>
            <person name="Doggett J."/>
            <person name="Mayes R."/>
            <person name="Keating L."/>
            <person name="Wheeler P.R."/>
            <person name="Parkhill J."/>
            <person name="Barrell B.G."/>
            <person name="Cole S.T."/>
            <person name="Gordon S.V."/>
            <person name="Hewinson R.G."/>
        </authorList>
    </citation>
    <scope>NUCLEOTIDE SEQUENCE [LARGE SCALE GENOMIC DNA]</scope>
    <source>
        <strain>ATCC BAA-935 / AF2122/97</strain>
    </source>
</reference>
<reference key="2">
    <citation type="journal article" date="2017" name="Genome Announc.">
        <title>Updated reference genome sequence and annotation of Mycobacterium bovis AF2122/97.</title>
        <authorList>
            <person name="Malone K.M."/>
            <person name="Farrell D."/>
            <person name="Stuber T.P."/>
            <person name="Schubert O.T."/>
            <person name="Aebersold R."/>
            <person name="Robbe-Austerman S."/>
            <person name="Gordon S.V."/>
        </authorList>
    </citation>
    <scope>NUCLEOTIDE SEQUENCE [LARGE SCALE GENOMIC DNA]</scope>
    <scope>GENOME REANNOTATION</scope>
    <source>
        <strain>ATCC BAA-935 / AF2122/97</strain>
    </source>
</reference>
<dbReference type="EMBL" id="LT708304">
    <property type="protein sequence ID" value="SIT99980.1"/>
    <property type="molecule type" value="Genomic_DNA"/>
</dbReference>
<dbReference type="RefSeq" id="NP_855031.1">
    <property type="nucleotide sequence ID" value="NC_002945.3"/>
</dbReference>
<dbReference type="RefSeq" id="WP_003406937.1">
    <property type="nucleotide sequence ID" value="NC_002945.4"/>
</dbReference>
<dbReference type="SMR" id="P0A5E8"/>
<dbReference type="KEGG" id="mbo:BQ2027_MB1377C"/>
<dbReference type="PATRIC" id="fig|233413.5.peg.1509"/>
<dbReference type="Proteomes" id="UP000001419">
    <property type="component" value="Chromosome"/>
</dbReference>
<dbReference type="GO" id="GO:0005886">
    <property type="term" value="C:plasma membrane"/>
    <property type="evidence" value="ECO:0007669"/>
    <property type="project" value="UniProtKB-SubCell"/>
</dbReference>
<dbReference type="InterPro" id="IPR023845">
    <property type="entry name" value="DUF3817_TM"/>
</dbReference>
<dbReference type="NCBIfam" id="TIGR03954">
    <property type="entry name" value="integ_memb_HG"/>
    <property type="match status" value="1"/>
</dbReference>
<dbReference type="PANTHER" id="PTHR40077:SF2">
    <property type="entry name" value="MEMBRANE PROTEIN"/>
    <property type="match status" value="1"/>
</dbReference>
<dbReference type="PANTHER" id="PTHR40077">
    <property type="entry name" value="MEMBRANE PROTEIN-RELATED"/>
    <property type="match status" value="1"/>
</dbReference>
<dbReference type="Pfam" id="PF12823">
    <property type="entry name" value="DUF3817"/>
    <property type="match status" value="1"/>
</dbReference>
<accession>P0A5E8</accession>
<accession>A0A1R3XY36</accession>
<accession>Q11012</accession>
<accession>X2BHM0</accession>
<feature type="chain" id="PRO_0000103815" description="Uncharacterized protein Mb1377c">
    <location>
        <begin position="1"/>
        <end position="120"/>
    </location>
</feature>
<feature type="transmembrane region" description="Helical" evidence="1">
    <location>
        <begin position="24"/>
        <end position="44"/>
    </location>
</feature>
<feature type="transmembrane region" description="Helical" evidence="1">
    <location>
        <begin position="61"/>
        <end position="81"/>
    </location>
</feature>
<feature type="transmembrane region" description="Helical" evidence="1">
    <location>
        <begin position="86"/>
        <end position="106"/>
    </location>
</feature>
<evidence type="ECO:0000255" key="1"/>
<evidence type="ECO:0000305" key="2"/>
<name>Y1377_MYCBO</name>
<protein>
    <recommendedName>
        <fullName>Uncharacterized protein Mb1377c</fullName>
    </recommendedName>
</protein>
<proteinExistence type="predicted"/>